<sequence>MTHSVTLRGPSPWGFRLVGGRDFSAPLTISRVHAGSKAALAALCPGDLIQAINGESTELMTHLEAQNRIKGCHDHLTLSVSRPENKNWPSAPDDKAQAHRIHIDPESQDCSPATSRRSSVSGISLEDNRSGLGSPYGQPPRLPVPHNGSSNEATLPAQMSALHVSPPTSADTARVLPRNRDCRVDLGSEVYRMLREPAEPTASEPKQSGSFRYLQGMLEAGEGGDRPGSGGPRNLKPAASKLGAPLSGLQGLPECTRCGHGIVGTIVKARDKLYHPECFMCSDCGLNLKQRGYFFLDERLYCENHAKARVKPPEGYDVVAVYPNAKVELV</sequence>
<reference key="1">
    <citation type="journal article" date="1998" name="Mol. Biol. Cell">
        <title>PDZ motifs in PTP-BL and RIL bind to internal protein segments in the LIM domain protein RIL.</title>
        <authorList>
            <person name="Cuppen E."/>
            <person name="Gerrits H."/>
            <person name="Pepers B."/>
            <person name="Wieringa B."/>
            <person name="Hendriks W."/>
        </authorList>
    </citation>
    <scope>NUCLEOTIDE SEQUENCE [MRNA]</scope>
    <scope>PHOSPHORYLATION</scope>
    <scope>INTERACTION WITH PTPN13</scope>
    <source>
        <strain>BALB/cJ</strain>
        <tissue>Brain</tissue>
    </source>
</reference>
<reference key="2">
    <citation type="journal article" date="2009" name="PLoS Biol.">
        <title>Lineage-specific biology revealed by a finished genome assembly of the mouse.</title>
        <authorList>
            <person name="Church D.M."/>
            <person name="Goodstadt L."/>
            <person name="Hillier L.W."/>
            <person name="Zody M.C."/>
            <person name="Goldstein S."/>
            <person name="She X."/>
            <person name="Bult C.J."/>
            <person name="Agarwala R."/>
            <person name="Cherry J.L."/>
            <person name="DiCuccio M."/>
            <person name="Hlavina W."/>
            <person name="Kapustin Y."/>
            <person name="Meric P."/>
            <person name="Maglott D."/>
            <person name="Birtle Z."/>
            <person name="Marques A.C."/>
            <person name="Graves T."/>
            <person name="Zhou S."/>
            <person name="Teague B."/>
            <person name="Potamousis K."/>
            <person name="Churas C."/>
            <person name="Place M."/>
            <person name="Herschleb J."/>
            <person name="Runnheim R."/>
            <person name="Forrest D."/>
            <person name="Amos-Landgraf J."/>
            <person name="Schwartz D.C."/>
            <person name="Cheng Z."/>
            <person name="Lindblad-Toh K."/>
            <person name="Eichler E.E."/>
            <person name="Ponting C.P."/>
        </authorList>
    </citation>
    <scope>NUCLEOTIDE SEQUENCE [LARGE SCALE GENOMIC DNA]</scope>
    <source>
        <strain>C57BL/6J</strain>
    </source>
</reference>
<reference key="3">
    <citation type="submission" date="2005-07" db="EMBL/GenBank/DDBJ databases">
        <authorList>
            <person name="Mural R.J."/>
            <person name="Adams M.D."/>
            <person name="Myers E.W."/>
            <person name="Smith H.O."/>
            <person name="Venter J.C."/>
        </authorList>
    </citation>
    <scope>NUCLEOTIDE SEQUENCE [LARGE SCALE GENOMIC DNA]</scope>
</reference>
<reference key="4">
    <citation type="journal article" date="2004" name="Genome Res.">
        <title>The status, quality, and expansion of the NIH full-length cDNA project: the Mammalian Gene Collection (MGC).</title>
        <authorList>
            <consortium name="The MGC Project Team"/>
        </authorList>
    </citation>
    <scope>NUCLEOTIDE SEQUENCE [LARGE SCALE MRNA]</scope>
    <source>
        <tissue>Lung</tissue>
    </source>
</reference>
<reference key="5">
    <citation type="journal article" date="2000" name="Eur. J. Cell Biol.">
        <title>The zyxin-related protein TRIP6 interacts with PDZ motifs in the adaptor protein RIL and the protein tyrosine phosphatase PTP-BL.</title>
        <authorList>
            <person name="Cuppen E."/>
            <person name="van Ham M."/>
            <person name="Wansink D.G."/>
            <person name="de Leeuw A."/>
            <person name="Wieringa B."/>
            <person name="Hendriks W."/>
        </authorList>
    </citation>
    <scope>INTERACTION WITH TRIP6 AND PTPN13</scope>
    <scope>MUTAGENESIS OF 326-VAL--VAL-330</scope>
</reference>
<reference key="6">
    <citation type="journal article" date="2004" name="Exp. Cell Res.">
        <title>The PDZ-LIM protein RIL modulates actin stress fiber turnover and enhances the association of alpha-actinin with F-actin.</title>
        <authorList>
            <person name="Vallenius T."/>
            <person name="Scharm B."/>
            <person name="Vesikansa A."/>
            <person name="Luukko K."/>
            <person name="Schaefer R."/>
            <person name="Maekelae T.P."/>
        </authorList>
    </citation>
    <scope>TISSUE SPECIFICITY</scope>
</reference>
<reference key="7">
    <citation type="journal article" date="2004" name="Mol. Biol. Rep.">
        <title>The interaction of PTP-BL PDZ domains with RIL: an enigmatic role for the RIL LIM domain.</title>
        <authorList>
            <person name="van den Berk L.C."/>
            <person name="van Ham M.A."/>
            <person name="te Lindert M.M."/>
            <person name="Walma T."/>
            <person name="Aelen J."/>
            <person name="Vuister G.W."/>
            <person name="Hendriks W.J."/>
        </authorList>
    </citation>
    <scope>INTERACTION WITH PDLIM3 AND PTPN13</scope>
    <scope>MUTAGENESIS OF GLY-261; VAL-263; GLY-264; THR-265; ILE-266; VAL-267; LYS-272; TYR-274; PRO-276; GLU-277; MET-280; LEU-286; ASN-287; LEU-288; ARG-291; GLY-292; PHE-294; PHE-295; ARG-299 AND TYR-301</scope>
</reference>
<reference key="8">
    <citation type="journal article" date="2006" name="Mol. Cell. Proteomics">
        <title>Comprehensive identification of phosphorylation sites in postsynaptic density preparations.</title>
        <authorList>
            <person name="Trinidad J.C."/>
            <person name="Specht C.G."/>
            <person name="Thalhammer A."/>
            <person name="Schoepfer R."/>
            <person name="Burlingame A.L."/>
        </authorList>
    </citation>
    <scope>PHOSPHORYLATION [LARGE SCALE ANALYSIS] AT SER-111</scope>
    <scope>IDENTIFICATION BY MASS SPECTROMETRY [LARGE SCALE ANALYSIS]</scope>
    <source>
        <tissue>Brain</tissue>
    </source>
</reference>
<reference key="9">
    <citation type="journal article" date="2007" name="Proc. Natl. Acad. Sci. U.S.A.">
        <title>Large-scale phosphorylation analysis of mouse liver.</title>
        <authorList>
            <person name="Villen J."/>
            <person name="Beausoleil S.A."/>
            <person name="Gerber S.A."/>
            <person name="Gygi S.P."/>
        </authorList>
    </citation>
    <scope>PHOSPHORYLATION [LARGE SCALE ANALYSIS] AT SER-111</scope>
    <scope>IDENTIFICATION BY MASS SPECTROMETRY [LARGE SCALE ANALYSIS]</scope>
    <source>
        <tissue>Liver</tissue>
    </source>
</reference>
<reference key="10">
    <citation type="journal article" date="2010" name="Cell">
        <title>A tissue-specific atlas of mouse protein phosphorylation and expression.</title>
        <authorList>
            <person name="Huttlin E.L."/>
            <person name="Jedrychowski M.P."/>
            <person name="Elias J.E."/>
            <person name="Goswami T."/>
            <person name="Rad R."/>
            <person name="Beausoleil S.A."/>
            <person name="Villen J."/>
            <person name="Haas W."/>
            <person name="Sowa M.E."/>
            <person name="Gygi S.P."/>
        </authorList>
    </citation>
    <scope>PHOSPHORYLATION [LARGE SCALE ANALYSIS] AT SER-107; SER-111; SER-115; SER-118; SER-119 AND SER-124</scope>
    <scope>IDENTIFICATION BY MASS SPECTROMETRY [LARGE SCALE ANALYSIS]</scope>
    <source>
        <tissue>Brain</tissue>
        <tissue>Brown adipose tissue</tissue>
        <tissue>Heart</tissue>
        <tissue>Kidney</tissue>
        <tissue>Liver</tissue>
        <tissue>Lung</tissue>
        <tissue>Pancreas</tissue>
        <tissue>Spleen</tissue>
        <tissue>Testis</tissue>
    </source>
</reference>
<proteinExistence type="evidence at protein level"/>
<comment type="function">
    <text evidence="1 2">Suppresses SRC activation by recognizing and binding to active SRC and facilitating PTPN13-mediated dephosphorylation of SRC 'Tyr-419' leading to its inactivation. Inactivated SRC dissociates from this protein allowing the initiation of a new SRC inactivation cycle. Involved in reorganization of the actin cytoskeleton (By similarity). In nonmuscle cells, binds to ACTN1 (alpha-actinin-1), increases the affinity of ACTN1 to F-actin (filamentous actin), and promotes formation of actin stress fibers. Involved in regulation of the synaptic AMPA receptor transport in dendritic spines of hippocampal pyramidal neurons directing the receptors toward an insertion at the postsynaptic membrane. Links endosomal surface-internalized GRIA1-containing AMPA receptors to the alpha-actinin/actin cytoskeleton. Increases AMPA receptor-mediated excitatory postsynaptic currents in neurons (By similarity).</text>
</comment>
<comment type="subunit">
    <text evidence="1 2 6 8 9">Homodimer (By similarity). Interacts (via C-terminus only or via combined C-terminus and LIM domain, but not LIM domain only) with PTPN13 (via the second or fourth PDZ domains) (PubMed:15663004, PubMed:9487134). Found in a complex with PTPN13 and TRIP6 (PubMed:10826496). Interacts (via PDZ domain) with ACTN1 and ACTN2 (via C-terminal SDL residues) (By similarity). Interacts (via PDZ domain) with TRIP6 (via the second LIM domain or via the third LIM domain plus C-terminus) (PubMed:10826496). Interacts (via LIM domain) with GRIA1 (via C-terminus); this interaction as well as the interaction with alpha-actinin is required for their colocalization in early endosomes. Interacts with PDLIM1 (By similarity). Forms (via LIM domain) a heterodimer with PDLIM3 (PubMed:15663004). Interacts directly with SRC (via kinase domain and to a lesser extent the SH2 domain) (By similarity).</text>
</comment>
<comment type="interaction">
    <interactant intactId="EBI-7288319">
        <id>P70271</id>
    </interactant>
    <interactant intactId="EBI-643879">
        <id>Q9Z1Y4</id>
        <label>Trip6</label>
    </interactant>
    <organismsDiffer>false</organismsDiffer>
    <experiments>2</experiments>
</comment>
<comment type="subcellular location">
    <subcellularLocation>
        <location evidence="1">Cytoplasm</location>
        <location evidence="1">Cytoskeleton</location>
    </subcellularLocation>
    <subcellularLocation>
        <location evidence="1">Cell projection</location>
        <location evidence="1">Dendritic spine</location>
    </subcellularLocation>
    <subcellularLocation>
        <location evidence="1">Early endosome membrane</location>
        <topology evidence="1">Peripheral membrane protein</topology>
        <orientation evidence="1">Cytoplasmic side</orientation>
    </subcellularLocation>
    <subcellularLocation>
        <location evidence="1">Recycling endosome membrane</location>
        <topology evidence="1">Peripheral membrane protein</topology>
        <orientation evidence="1">Cytoplasmic side</orientation>
    </subcellularLocation>
    <subcellularLocation>
        <location evidence="2">Nucleus</location>
    </subcellularLocation>
    <subcellularLocation>
        <location evidence="2">Cytoplasm</location>
        <location evidence="2">Perinuclear region</location>
    </subcellularLocation>
    <subcellularLocation>
        <location evidence="2">Cell projection</location>
        <location evidence="2">Lamellipodium</location>
    </subcellularLocation>
    <subcellularLocation>
        <location evidence="1">Synapse</location>
        <location evidence="1">Synaptosome</location>
    </subcellularLocation>
    <text evidence="1 2">Localizes to actin stress fibers in nonmuscle cells. Colocalizes with GRIA1 in early endosomes. Enriched in numerous but not all spine-like structures along dendritic branches. Colocalizes with actin and enriched at sites containing larger amounts of actin and alpha-actinin. Targeted efficiently to spines via its PDZ domain-mediated interaction with the alpha-actinin/actin cytoskeletal complex. Localizes to synaptosomes in brain (By similarity). Colocalizes with F-actin. Colocalizes with TRIP6 at cell-cell contacts and lamellipodia. In the cytoplasm, displays a fibrillar pattern with characteristic thick fibers and occasional clusters. Colocalizes with the actin stress fibers. Oxidative stress induces redistribution from cytoskeleton to cytosol. Colocalizes with SRC at the perinuclear region, but not at focal adhesions (By similarity).</text>
</comment>
<comment type="tissue specificity">
    <text evidence="7">Expressed in several non-muscle tissues including lung, brain, ovary and uterus, and especially in epithelial cells at 14 dpc. In the uterus, high expression in the glandular epithelium, but absent in the simple columnar epithelium lining the uterus cavity.</text>
</comment>
<comment type="PTM">
    <text evidence="9">Phosphorylated on tyrosine residue(s). Can be dephosphorylated by PTPN13.</text>
</comment>
<feature type="chain" id="PRO_0000075874" description="PDZ and LIM domain protein 4">
    <location>
        <begin position="1"/>
        <end position="330"/>
    </location>
</feature>
<feature type="domain" description="PDZ" evidence="4">
    <location>
        <begin position="1"/>
        <end position="84"/>
    </location>
</feature>
<feature type="domain" description="LIM zinc-binding" evidence="3">
    <location>
        <begin position="255"/>
        <end position="305"/>
    </location>
</feature>
<feature type="region of interest" description="Disordered" evidence="5">
    <location>
        <begin position="104"/>
        <end position="153"/>
    </location>
</feature>
<feature type="region of interest" description="Disordered" evidence="5">
    <location>
        <begin position="219"/>
        <end position="242"/>
    </location>
</feature>
<feature type="compositionally biased region" description="Polar residues" evidence="5">
    <location>
        <begin position="108"/>
        <end position="122"/>
    </location>
</feature>
<feature type="modified residue" description="Phosphoserine" evidence="13">
    <location>
        <position position="107"/>
    </location>
</feature>
<feature type="modified residue" description="Phosphoserine" evidence="11 12 13">
    <location>
        <position position="111"/>
    </location>
</feature>
<feature type="modified residue" description="Phosphoserine" evidence="13">
    <location>
        <position position="115"/>
    </location>
</feature>
<feature type="modified residue" description="Phosphoserine" evidence="13">
    <location>
        <position position="118"/>
    </location>
</feature>
<feature type="modified residue" description="Phosphoserine" evidence="13">
    <location>
        <position position="119"/>
    </location>
</feature>
<feature type="modified residue" description="Phosphoserine" evidence="13">
    <location>
        <position position="124"/>
    </location>
</feature>
<feature type="modified residue" description="Phosphoserine" evidence="1">
    <location>
        <position position="134"/>
    </location>
</feature>
<feature type="mutagenesis site" description="No loss of interaction with PTPN13 (via PDZ domains); when associated with A-263." evidence="8">
    <original>G</original>
    <variation>A</variation>
    <location>
        <position position="261"/>
    </location>
</feature>
<feature type="mutagenesis site" description="No loss of interaction with PTPN13 (via PDZ domains); when associated with A-261." evidence="8">
    <original>V</original>
    <variation>A</variation>
    <location>
        <position position="263"/>
    </location>
</feature>
<feature type="mutagenesis site" description="No loss of interaction with PTPN13 (via PDZ domains); when associated with A-266." evidence="8">
    <original>G</original>
    <variation>A</variation>
    <location>
        <position position="264"/>
    </location>
</feature>
<feature type="mutagenesis site" description="No loss of interaction with PTPN13 (via PDZ domains); when associated with A-267." evidence="8">
    <original>T</original>
    <variation>A</variation>
    <location>
        <position position="265"/>
    </location>
</feature>
<feature type="mutagenesis site" description="No loss of interaction with PTPN13 (via PDZ domains); when associated with A-264." evidence="8">
    <original>I</original>
    <variation>A</variation>
    <location>
        <position position="266"/>
    </location>
</feature>
<feature type="mutagenesis site" description="No loss of interaction with PTPN13 (via PDZ domains); when associated with A-265." evidence="8">
    <original>V</original>
    <variation>A</variation>
    <location>
        <position position="267"/>
    </location>
</feature>
<feature type="mutagenesis site" description="No loss of interaction with PTPN13 (via PDZ domains); when associated with A-274." evidence="8">
    <original>K</original>
    <variation>A</variation>
    <location>
        <position position="272"/>
    </location>
</feature>
<feature type="mutagenesis site" description="No loss of interaction with PTPN13 (via PDZ domains); when associated with A-272." evidence="8">
    <original>Y</original>
    <variation>A</variation>
    <location>
        <position position="274"/>
    </location>
</feature>
<feature type="mutagenesis site" description="No loss of interaction with PTPN13 (via PDZ domains); when associated with A-277." evidence="8">
    <original>P</original>
    <variation>A</variation>
    <location>
        <position position="276"/>
    </location>
</feature>
<feature type="mutagenesis site" description="No loss of interaction with PTPN13 (via PDZ domains); when associated with A-276." evidence="8">
    <original>E</original>
    <variation>A</variation>
    <location>
        <position position="277"/>
    </location>
</feature>
<feature type="mutagenesis site" description="No loss of interaction with PTPN13 (via PDZ domains)." evidence="8">
    <original>M</original>
    <variation>A</variation>
    <location>
        <position position="280"/>
    </location>
</feature>
<feature type="mutagenesis site" description="No loss of interaction with PTPN13 (via PDZ domains); when associated with A-288." evidence="8">
    <original>L</original>
    <variation>A</variation>
    <location>
        <position position="286"/>
    </location>
</feature>
<feature type="mutagenesis site" description="No loss of interaction with PTPN13 (via PDZ domains)." evidence="8">
    <original>N</original>
    <variation>A</variation>
    <location>
        <position position="287"/>
    </location>
</feature>
<feature type="mutagenesis site" description="No loss of interaction with PTPN13 (via PDZ domains); when associated with A-286." evidence="8">
    <original>L</original>
    <variation>A</variation>
    <location>
        <position position="288"/>
    </location>
</feature>
<feature type="mutagenesis site" description="No loss of interaction with PTPN13 (via PDZ domains); when associated with A-292." evidence="8">
    <original>R</original>
    <variation>A</variation>
    <location>
        <position position="291"/>
    </location>
</feature>
<feature type="mutagenesis site" description="No loss of interaction with PTPN13 (via PDZ domains); when associated with A-291." evidence="8">
    <original>G</original>
    <variation>A</variation>
    <location>
        <position position="292"/>
    </location>
</feature>
<feature type="mutagenesis site" description="No loss of interaction with PTPN13 (via PDZ domains); when associated with A-295." evidence="8">
    <original>F</original>
    <variation>A</variation>
    <location>
        <position position="294"/>
    </location>
</feature>
<feature type="mutagenesis site" description="No loss of interaction with PTPN13 (via PDZ domains); when associated with A-294." evidence="8">
    <original>F</original>
    <variation>A</variation>
    <location>
        <position position="295"/>
    </location>
</feature>
<feature type="mutagenesis site" description="No loss of interaction with PTPN13 (via PDZ domains); when associated with A-301." evidence="8">
    <original>R</original>
    <variation>A</variation>
    <location>
        <position position="299"/>
    </location>
</feature>
<feature type="mutagenesis site" description="No loss of interaction with PTPN13 (via PDZ domains); when associated with A-299." evidence="8">
    <original>Y</original>
    <variation>A</variation>
    <location>
        <position position="301"/>
    </location>
</feature>
<feature type="mutagenesis site" description="Interaction with TRIP6." evidence="6">
    <location>
        <begin position="326"/>
        <end position="330"/>
    </location>
</feature>
<feature type="sequence conflict" description="In Ref. 1; CAA69648." evidence="10" ref="1">
    <original>A</original>
    <variation>L</variation>
    <location>
        <position position="25"/>
    </location>
</feature>
<feature type="sequence conflict" description="In Ref. 1; CAA69648." evidence="10" ref="1">
    <original>A</original>
    <variation>S</variation>
    <location>
        <position position="91"/>
    </location>
</feature>
<feature type="sequence conflict" description="In Ref. 1; CAA69648." evidence="10" ref="1">
    <original>S</original>
    <variation>F</variation>
    <location>
        <position position="107"/>
    </location>
</feature>
<keyword id="KW-0966">Cell projection</keyword>
<keyword id="KW-0963">Cytoplasm</keyword>
<keyword id="KW-0206">Cytoskeleton</keyword>
<keyword id="KW-0967">Endosome</keyword>
<keyword id="KW-0440">LIM domain</keyword>
<keyword id="KW-0472">Membrane</keyword>
<keyword id="KW-0479">Metal-binding</keyword>
<keyword id="KW-0539">Nucleus</keyword>
<keyword id="KW-0597">Phosphoprotein</keyword>
<keyword id="KW-1185">Reference proteome</keyword>
<keyword id="KW-0770">Synapse</keyword>
<keyword id="KW-0771">Synaptosome</keyword>
<keyword id="KW-0862">Zinc</keyword>
<accession>P70271</accession>
<accession>Q5SWV2</accession>
<accession>Q8K0W4</accession>
<name>PDLI4_MOUSE</name>
<gene>
    <name type="primary">Pdlim4</name>
    <name type="synonym">Ril</name>
</gene>
<dbReference type="EMBL" id="Y08361">
    <property type="protein sequence ID" value="CAA69648.1"/>
    <property type="molecule type" value="mRNA"/>
</dbReference>
<dbReference type="EMBL" id="AL596444">
    <property type="status" value="NOT_ANNOTATED_CDS"/>
    <property type="molecule type" value="Genomic_DNA"/>
</dbReference>
<dbReference type="EMBL" id="CH466575">
    <property type="protein sequence ID" value="EDL33550.1"/>
    <property type="molecule type" value="Genomic_DNA"/>
</dbReference>
<dbReference type="EMBL" id="BC030068">
    <property type="protein sequence ID" value="AAH30068.1"/>
    <property type="molecule type" value="mRNA"/>
</dbReference>
<dbReference type="CCDS" id="CCDS24690.1"/>
<dbReference type="RefSeq" id="NP_062290.2">
    <property type="nucleotide sequence ID" value="NM_019417.4"/>
</dbReference>
<dbReference type="SMR" id="P70271"/>
<dbReference type="BioGRID" id="205965">
    <property type="interactions" value="10"/>
</dbReference>
<dbReference type="FunCoup" id="P70271">
    <property type="interactions" value="78"/>
</dbReference>
<dbReference type="IntAct" id="P70271">
    <property type="interactions" value="6"/>
</dbReference>
<dbReference type="MINT" id="P70271"/>
<dbReference type="STRING" id="10090.ENSMUSP00000018755"/>
<dbReference type="iPTMnet" id="P70271"/>
<dbReference type="PhosphoSitePlus" id="P70271"/>
<dbReference type="jPOST" id="P70271"/>
<dbReference type="PaxDb" id="10090-ENSMUSP00000018755"/>
<dbReference type="PeptideAtlas" id="P70271"/>
<dbReference type="ProteomicsDB" id="288086"/>
<dbReference type="Antibodypedia" id="2128">
    <property type="antibodies" value="198 antibodies from 27 providers"/>
</dbReference>
<dbReference type="DNASU" id="30794"/>
<dbReference type="Ensembl" id="ENSMUST00000018755.10">
    <property type="protein sequence ID" value="ENSMUSP00000018755.4"/>
    <property type="gene ID" value="ENSMUSG00000020388.13"/>
</dbReference>
<dbReference type="GeneID" id="30794"/>
<dbReference type="KEGG" id="mmu:30794"/>
<dbReference type="UCSC" id="uc007ixf.2">
    <property type="organism name" value="mouse"/>
</dbReference>
<dbReference type="AGR" id="MGI:1353470"/>
<dbReference type="CTD" id="8572"/>
<dbReference type="MGI" id="MGI:1353470">
    <property type="gene designation" value="Pdlim4"/>
</dbReference>
<dbReference type="VEuPathDB" id="HostDB:ENSMUSG00000020388"/>
<dbReference type="eggNOG" id="KOG1703">
    <property type="taxonomic scope" value="Eukaryota"/>
</dbReference>
<dbReference type="GeneTree" id="ENSGT00940000159536"/>
<dbReference type="HOGENOM" id="CLU_038114_1_1_1"/>
<dbReference type="InParanoid" id="P70271"/>
<dbReference type="OMA" id="DNKQMLN"/>
<dbReference type="OrthoDB" id="1293114at2759"/>
<dbReference type="PhylomeDB" id="P70271"/>
<dbReference type="TreeFam" id="TF106408"/>
<dbReference type="BioGRID-ORCS" id="30794">
    <property type="hits" value="4 hits in 78 CRISPR screens"/>
</dbReference>
<dbReference type="PRO" id="PR:P70271"/>
<dbReference type="Proteomes" id="UP000000589">
    <property type="component" value="Chromosome 11"/>
</dbReference>
<dbReference type="RNAct" id="P70271">
    <property type="molecule type" value="protein"/>
</dbReference>
<dbReference type="Bgee" id="ENSMUSG00000020388">
    <property type="expression patterns" value="Expressed in lip and 228 other cell types or tissues"/>
</dbReference>
<dbReference type="ExpressionAtlas" id="P70271">
    <property type="expression patterns" value="baseline and differential"/>
</dbReference>
<dbReference type="GO" id="GO:0005829">
    <property type="term" value="C:cytosol"/>
    <property type="evidence" value="ECO:0007669"/>
    <property type="project" value="Ensembl"/>
</dbReference>
<dbReference type="GO" id="GO:0043197">
    <property type="term" value="C:dendritic spine"/>
    <property type="evidence" value="ECO:0000250"/>
    <property type="project" value="UniProtKB"/>
</dbReference>
<dbReference type="GO" id="GO:0031905">
    <property type="term" value="C:early endosome lumen"/>
    <property type="evidence" value="ECO:0000250"/>
    <property type="project" value="UniProtKB"/>
</dbReference>
<dbReference type="GO" id="GO:0031901">
    <property type="term" value="C:early endosome membrane"/>
    <property type="evidence" value="ECO:0007669"/>
    <property type="project" value="UniProtKB-SubCell"/>
</dbReference>
<dbReference type="GO" id="GO:0031941">
    <property type="term" value="C:filamentous actin"/>
    <property type="evidence" value="ECO:0007669"/>
    <property type="project" value="Ensembl"/>
</dbReference>
<dbReference type="GO" id="GO:0030027">
    <property type="term" value="C:lamellipodium"/>
    <property type="evidence" value="ECO:0007669"/>
    <property type="project" value="UniProtKB-SubCell"/>
</dbReference>
<dbReference type="GO" id="GO:0005634">
    <property type="term" value="C:nucleus"/>
    <property type="evidence" value="ECO:0007669"/>
    <property type="project" value="UniProtKB-SubCell"/>
</dbReference>
<dbReference type="GO" id="GO:0048471">
    <property type="term" value="C:perinuclear region of cytoplasm"/>
    <property type="evidence" value="ECO:0007669"/>
    <property type="project" value="UniProtKB-SubCell"/>
</dbReference>
<dbReference type="GO" id="GO:0045211">
    <property type="term" value="C:postsynaptic membrane"/>
    <property type="evidence" value="ECO:0000250"/>
    <property type="project" value="UniProtKB"/>
</dbReference>
<dbReference type="GO" id="GO:0034777">
    <property type="term" value="C:recycling endosome lumen"/>
    <property type="evidence" value="ECO:0000250"/>
    <property type="project" value="UniProtKB"/>
</dbReference>
<dbReference type="GO" id="GO:0055038">
    <property type="term" value="C:recycling endosome membrane"/>
    <property type="evidence" value="ECO:0007669"/>
    <property type="project" value="UniProtKB-SubCell"/>
</dbReference>
<dbReference type="GO" id="GO:0001725">
    <property type="term" value="C:stress fiber"/>
    <property type="evidence" value="ECO:0007669"/>
    <property type="project" value="Ensembl"/>
</dbReference>
<dbReference type="GO" id="GO:0051393">
    <property type="term" value="F:alpha-actinin binding"/>
    <property type="evidence" value="ECO:0007669"/>
    <property type="project" value="Ensembl"/>
</dbReference>
<dbReference type="GO" id="GO:0046872">
    <property type="term" value="F:metal ion binding"/>
    <property type="evidence" value="ECO:0007669"/>
    <property type="project" value="UniProtKB-KW"/>
</dbReference>
<dbReference type="GO" id="GO:0042803">
    <property type="term" value="F:protein homodimerization activity"/>
    <property type="evidence" value="ECO:0007669"/>
    <property type="project" value="Ensembl"/>
</dbReference>
<dbReference type="GO" id="GO:0019903">
    <property type="term" value="F:protein phosphatase binding"/>
    <property type="evidence" value="ECO:0000353"/>
    <property type="project" value="UniProtKB"/>
</dbReference>
<dbReference type="GO" id="GO:0030036">
    <property type="term" value="P:actin cytoskeleton organization"/>
    <property type="evidence" value="ECO:0007669"/>
    <property type="project" value="Ensembl"/>
</dbReference>
<dbReference type="GO" id="GO:0098976">
    <property type="term" value="P:excitatory chemical synaptic transmission"/>
    <property type="evidence" value="ECO:0000250"/>
    <property type="project" value="UniProtKB"/>
</dbReference>
<dbReference type="CDD" id="cd09451">
    <property type="entry name" value="LIM_RIL"/>
    <property type="match status" value="1"/>
</dbReference>
<dbReference type="CDD" id="cd06753">
    <property type="entry name" value="PDZ_PDLIM-like"/>
    <property type="match status" value="1"/>
</dbReference>
<dbReference type="FunFam" id="2.10.110.10:FF:000026">
    <property type="entry name" value="PDZ and LIM domain protein 3"/>
    <property type="match status" value="1"/>
</dbReference>
<dbReference type="FunFam" id="2.30.42.10:FF:000055">
    <property type="entry name" value="PDZ and LIM domain protein 3"/>
    <property type="match status" value="1"/>
</dbReference>
<dbReference type="Gene3D" id="2.30.42.10">
    <property type="match status" value="1"/>
</dbReference>
<dbReference type="Gene3D" id="2.10.110.10">
    <property type="entry name" value="Cysteine Rich Protein"/>
    <property type="match status" value="1"/>
</dbReference>
<dbReference type="InterPro" id="IPR031847">
    <property type="entry name" value="PDLI1-4/Zasp-like_mid"/>
</dbReference>
<dbReference type="InterPro" id="IPR001478">
    <property type="entry name" value="PDZ"/>
</dbReference>
<dbReference type="InterPro" id="IPR050604">
    <property type="entry name" value="PDZ-LIM_domain"/>
</dbReference>
<dbReference type="InterPro" id="IPR036034">
    <property type="entry name" value="PDZ_sf"/>
</dbReference>
<dbReference type="InterPro" id="IPR001781">
    <property type="entry name" value="Znf_LIM"/>
</dbReference>
<dbReference type="PANTHER" id="PTHR24214:SF6">
    <property type="entry name" value="PDZ AND LIM DOMAIN PROTEIN 4"/>
    <property type="match status" value="1"/>
</dbReference>
<dbReference type="PANTHER" id="PTHR24214">
    <property type="entry name" value="PDZ AND LIM DOMAIN PROTEIN ZASP"/>
    <property type="match status" value="1"/>
</dbReference>
<dbReference type="Pfam" id="PF15936">
    <property type="entry name" value="DUF4749"/>
    <property type="match status" value="1"/>
</dbReference>
<dbReference type="Pfam" id="PF00412">
    <property type="entry name" value="LIM"/>
    <property type="match status" value="1"/>
</dbReference>
<dbReference type="Pfam" id="PF00595">
    <property type="entry name" value="PDZ"/>
    <property type="match status" value="1"/>
</dbReference>
<dbReference type="SMART" id="SM00132">
    <property type="entry name" value="LIM"/>
    <property type="match status" value="1"/>
</dbReference>
<dbReference type="SMART" id="SM00228">
    <property type="entry name" value="PDZ"/>
    <property type="match status" value="1"/>
</dbReference>
<dbReference type="SUPFAM" id="SSF57716">
    <property type="entry name" value="Glucocorticoid receptor-like (DNA-binding domain)"/>
    <property type="match status" value="2"/>
</dbReference>
<dbReference type="SUPFAM" id="SSF50156">
    <property type="entry name" value="PDZ domain-like"/>
    <property type="match status" value="1"/>
</dbReference>
<dbReference type="PROSITE" id="PS00478">
    <property type="entry name" value="LIM_DOMAIN_1"/>
    <property type="match status" value="1"/>
</dbReference>
<dbReference type="PROSITE" id="PS50023">
    <property type="entry name" value="LIM_DOMAIN_2"/>
    <property type="match status" value="1"/>
</dbReference>
<dbReference type="PROSITE" id="PS50106">
    <property type="entry name" value="PDZ"/>
    <property type="match status" value="1"/>
</dbReference>
<organism>
    <name type="scientific">Mus musculus</name>
    <name type="common">Mouse</name>
    <dbReference type="NCBI Taxonomy" id="10090"/>
    <lineage>
        <taxon>Eukaryota</taxon>
        <taxon>Metazoa</taxon>
        <taxon>Chordata</taxon>
        <taxon>Craniata</taxon>
        <taxon>Vertebrata</taxon>
        <taxon>Euteleostomi</taxon>
        <taxon>Mammalia</taxon>
        <taxon>Eutheria</taxon>
        <taxon>Euarchontoglires</taxon>
        <taxon>Glires</taxon>
        <taxon>Rodentia</taxon>
        <taxon>Myomorpha</taxon>
        <taxon>Muroidea</taxon>
        <taxon>Muridae</taxon>
        <taxon>Murinae</taxon>
        <taxon>Mus</taxon>
        <taxon>Mus</taxon>
    </lineage>
</organism>
<protein>
    <recommendedName>
        <fullName>PDZ and LIM domain protein 4</fullName>
    </recommendedName>
    <alternativeName>
        <fullName>LIM protein RIL</fullName>
    </alternativeName>
    <alternativeName>
        <fullName>Reversion-induced LIM protein</fullName>
    </alternativeName>
</protein>
<evidence type="ECO:0000250" key="1">
    <source>
        <dbReference type="UniProtKB" id="P36202"/>
    </source>
</evidence>
<evidence type="ECO:0000250" key="2">
    <source>
        <dbReference type="UniProtKB" id="P50479"/>
    </source>
</evidence>
<evidence type="ECO:0000255" key="3">
    <source>
        <dbReference type="PROSITE-ProRule" id="PRU00125"/>
    </source>
</evidence>
<evidence type="ECO:0000255" key="4">
    <source>
        <dbReference type="PROSITE-ProRule" id="PRU00143"/>
    </source>
</evidence>
<evidence type="ECO:0000256" key="5">
    <source>
        <dbReference type="SAM" id="MobiDB-lite"/>
    </source>
</evidence>
<evidence type="ECO:0000269" key="6">
    <source>
    </source>
</evidence>
<evidence type="ECO:0000269" key="7">
    <source>
    </source>
</evidence>
<evidence type="ECO:0000269" key="8">
    <source>
    </source>
</evidence>
<evidence type="ECO:0000269" key="9">
    <source>
    </source>
</evidence>
<evidence type="ECO:0000305" key="10"/>
<evidence type="ECO:0007744" key="11">
    <source>
    </source>
</evidence>
<evidence type="ECO:0007744" key="12">
    <source>
    </source>
</evidence>
<evidence type="ECO:0007744" key="13">
    <source>
    </source>
</evidence>